<organism>
    <name type="scientific">Pseudomonas fluorescens (strain SBW25)</name>
    <dbReference type="NCBI Taxonomy" id="216595"/>
    <lineage>
        <taxon>Bacteria</taxon>
        <taxon>Pseudomonadati</taxon>
        <taxon>Pseudomonadota</taxon>
        <taxon>Gammaproteobacteria</taxon>
        <taxon>Pseudomonadales</taxon>
        <taxon>Pseudomonadaceae</taxon>
        <taxon>Pseudomonas</taxon>
    </lineage>
</organism>
<protein>
    <recommendedName>
        <fullName evidence="1">Probable septum site-determining protein MinC</fullName>
    </recommendedName>
</protein>
<sequence length="245" mass="26266">MSQTEPLDQDPVFQLKGSMLAITVLELARNDLDALDRQLAAKVALAPNFFNNAPLVLALDKLPAGQGVIDLPGLMRVCRSHGLRTLAIRASRIEDIAAAIAIELPVLPPSGARERPLEPLVGEEKKKPEKPPEPTIKPTKIITSPVRGGQQIYAQGGDLVVISSVSPGAELLADGNIHVYGPMRGRALAGIKGDTKARIFCQQLTAELVSIAGQYKVSEDLRRDPLWGASVQVNLSGDVLNIIRL</sequence>
<name>MINC_PSEFS</name>
<feature type="chain" id="PRO_1000204700" description="Probable septum site-determining protein MinC">
    <location>
        <begin position="1"/>
        <end position="245"/>
    </location>
</feature>
<feature type="region of interest" description="Disordered" evidence="2">
    <location>
        <begin position="113"/>
        <end position="138"/>
    </location>
</feature>
<feature type="compositionally biased region" description="Basic and acidic residues" evidence="2">
    <location>
        <begin position="113"/>
        <end position="132"/>
    </location>
</feature>
<dbReference type="EMBL" id="AM181176">
    <property type="protein sequence ID" value="CAY50993.1"/>
    <property type="molecule type" value="Genomic_DNA"/>
</dbReference>
<dbReference type="RefSeq" id="WP_015885132.1">
    <property type="nucleotide sequence ID" value="NC_012660.1"/>
</dbReference>
<dbReference type="SMR" id="C3K0D3"/>
<dbReference type="STRING" id="294.SRM1_01773"/>
<dbReference type="GeneID" id="93465962"/>
<dbReference type="eggNOG" id="COG0850">
    <property type="taxonomic scope" value="Bacteria"/>
</dbReference>
<dbReference type="HOGENOM" id="CLU_067812_0_1_6"/>
<dbReference type="OrthoDB" id="9794530at2"/>
<dbReference type="GO" id="GO:0000902">
    <property type="term" value="P:cell morphogenesis"/>
    <property type="evidence" value="ECO:0007669"/>
    <property type="project" value="InterPro"/>
</dbReference>
<dbReference type="GO" id="GO:0000917">
    <property type="term" value="P:division septum assembly"/>
    <property type="evidence" value="ECO:0007669"/>
    <property type="project" value="UniProtKB-KW"/>
</dbReference>
<dbReference type="GO" id="GO:0051302">
    <property type="term" value="P:regulation of cell division"/>
    <property type="evidence" value="ECO:0007669"/>
    <property type="project" value="InterPro"/>
</dbReference>
<dbReference type="GO" id="GO:1901891">
    <property type="term" value="P:regulation of cell septum assembly"/>
    <property type="evidence" value="ECO:0007669"/>
    <property type="project" value="InterPro"/>
</dbReference>
<dbReference type="Gene3D" id="2.160.20.70">
    <property type="match status" value="1"/>
</dbReference>
<dbReference type="Gene3D" id="3.30.70.260">
    <property type="match status" value="1"/>
</dbReference>
<dbReference type="HAMAP" id="MF_00267">
    <property type="entry name" value="MinC"/>
    <property type="match status" value="1"/>
</dbReference>
<dbReference type="InterPro" id="IPR016098">
    <property type="entry name" value="CAP/MinC_C"/>
</dbReference>
<dbReference type="InterPro" id="IPR013033">
    <property type="entry name" value="MinC"/>
</dbReference>
<dbReference type="InterPro" id="IPR036145">
    <property type="entry name" value="MinC_C_sf"/>
</dbReference>
<dbReference type="InterPro" id="IPR007874">
    <property type="entry name" value="MinC_N"/>
</dbReference>
<dbReference type="InterPro" id="IPR005526">
    <property type="entry name" value="Septum_form_inhib_MinC_C"/>
</dbReference>
<dbReference type="NCBIfam" id="TIGR01222">
    <property type="entry name" value="minC"/>
    <property type="match status" value="1"/>
</dbReference>
<dbReference type="PANTHER" id="PTHR34108">
    <property type="entry name" value="SEPTUM SITE-DETERMINING PROTEIN MINC"/>
    <property type="match status" value="1"/>
</dbReference>
<dbReference type="PANTHER" id="PTHR34108:SF1">
    <property type="entry name" value="SEPTUM SITE-DETERMINING PROTEIN MINC"/>
    <property type="match status" value="1"/>
</dbReference>
<dbReference type="Pfam" id="PF03775">
    <property type="entry name" value="MinC_C"/>
    <property type="match status" value="1"/>
</dbReference>
<dbReference type="Pfam" id="PF05209">
    <property type="entry name" value="MinC_N"/>
    <property type="match status" value="1"/>
</dbReference>
<dbReference type="SUPFAM" id="SSF63848">
    <property type="entry name" value="Cell-division inhibitor MinC, C-terminal domain"/>
    <property type="match status" value="1"/>
</dbReference>
<reference key="1">
    <citation type="journal article" date="2009" name="Genome Biol.">
        <title>Genomic and genetic analyses of diversity and plant interactions of Pseudomonas fluorescens.</title>
        <authorList>
            <person name="Silby M.W."/>
            <person name="Cerdeno-Tarraga A.M."/>
            <person name="Vernikos G.S."/>
            <person name="Giddens S.R."/>
            <person name="Jackson R.W."/>
            <person name="Preston G.M."/>
            <person name="Zhang X.-X."/>
            <person name="Moon C.D."/>
            <person name="Gehrig S.M."/>
            <person name="Godfrey S.A.C."/>
            <person name="Knight C.G."/>
            <person name="Malone J.G."/>
            <person name="Robinson Z."/>
            <person name="Spiers A.J."/>
            <person name="Harris S."/>
            <person name="Challis G.L."/>
            <person name="Yaxley A.M."/>
            <person name="Harris D."/>
            <person name="Seeger K."/>
            <person name="Murphy L."/>
            <person name="Rutter S."/>
            <person name="Squares R."/>
            <person name="Quail M.A."/>
            <person name="Saunders E."/>
            <person name="Mavromatis K."/>
            <person name="Brettin T.S."/>
            <person name="Bentley S.D."/>
            <person name="Hothersall J."/>
            <person name="Stephens E."/>
            <person name="Thomas C.M."/>
            <person name="Parkhill J."/>
            <person name="Levy S.B."/>
            <person name="Rainey P.B."/>
            <person name="Thomson N.R."/>
        </authorList>
    </citation>
    <scope>NUCLEOTIDE SEQUENCE [LARGE SCALE GENOMIC DNA]</scope>
    <source>
        <strain>SBW25</strain>
    </source>
</reference>
<gene>
    <name evidence="1" type="primary">minC</name>
    <name type="ordered locus">PFLU_4369</name>
</gene>
<proteinExistence type="inferred from homology"/>
<evidence type="ECO:0000255" key="1">
    <source>
        <dbReference type="HAMAP-Rule" id="MF_00267"/>
    </source>
</evidence>
<evidence type="ECO:0000256" key="2">
    <source>
        <dbReference type="SAM" id="MobiDB-lite"/>
    </source>
</evidence>
<accession>C3K0D3</accession>
<comment type="function">
    <text evidence="1">Cell division inhibitor that blocks the formation of polar Z ring septums. Rapidly oscillates between the poles of the cell to destabilize FtsZ filaments that have formed before they mature into polar Z rings. Prevents FtsZ polymerization.</text>
</comment>
<comment type="subunit">
    <text evidence="1">Interacts with MinD and FtsZ.</text>
</comment>
<comment type="similarity">
    <text evidence="1">Belongs to the MinC family.</text>
</comment>
<keyword id="KW-0131">Cell cycle</keyword>
<keyword id="KW-0132">Cell division</keyword>
<keyword id="KW-0717">Septation</keyword>